<sequence>MQYEAYQWGQSHPTSTSGSMLQDTPTAASQPVKRHAACDECRKRKLKCSGEISGCSRCIKQSLSCHYSVQKQMGRPPKKRLREDNDDISLLNIPDNDPWANSQIAHVPDFGAAIADVSEEPQILSSTHLSPYSFPYRLSTDEDHRHTWQLAPNESMSSIPATTTPWPDFSSVSAAAPKPFIMPPGLTPPIMPSTDSSPDQECSCLSYLYLCLSHLSSLKPFPISQHTICSLYISAKTAQSVIRCQSCPNRFDTGLQNVMFTGTLLNVIADSWLRVSRAEACELGNQVAPPAYAAKMNRSPDLRGAWNDYLRQLVRFSVIRGPMDIDAQTPCAQQAPSVLDLVEEMEARQRRWHESPDSHPLPPDQRLNIPSDQNCLNRDEQDLLCIRVAKSARNVIAKFGFQSDEYPESVPSLSPDSSISP</sequence>
<comment type="function">
    <text evidence="3">Transcription factor that is important for oxidative stress resistance and essential for gliotoxin (GT) self-protection through the regulation of a gene encoding a putative gliT homolog, even if E.nidulans does not produce gliotoxin itself.</text>
</comment>
<comment type="subcellular location">
    <subcellularLocation>
        <location evidence="1">Nucleus</location>
    </subcellularLocation>
</comment>
<comment type="disruption phenotype">
    <text evidence="3">Abolishes growth in the presence of gliotoxin (PubMed:32667960). Leads to reduced growth in the presence of the oxidative stress-inducing compounds allyl alcohol, t-butyl hydroperoxide, but not menadione (PubMed:32667960).</text>
</comment>
<protein>
    <recommendedName>
        <fullName evidence="4">Transcription factor rglT</fullName>
    </recommendedName>
</protein>
<keyword id="KW-0238">DNA-binding</keyword>
<keyword id="KW-0539">Nucleus</keyword>
<keyword id="KW-1185">Reference proteome</keyword>
<keyword id="KW-0804">Transcription</keyword>
<keyword id="KW-0805">Transcription regulation</keyword>
<name>RGLT_EMENI</name>
<feature type="chain" id="PRO_0000454488" description="Transcription factor rglT">
    <location>
        <begin position="1"/>
        <end position="421"/>
    </location>
</feature>
<feature type="DNA-binding region" description="Zn(2)-C6 fungal-type" evidence="1">
    <location>
        <begin position="38"/>
        <end position="65"/>
    </location>
</feature>
<feature type="region of interest" description="Disordered" evidence="2">
    <location>
        <begin position="1"/>
        <end position="29"/>
    </location>
</feature>
<feature type="region of interest" description="Disordered" evidence="2">
    <location>
        <begin position="346"/>
        <end position="371"/>
    </location>
</feature>
<feature type="compositionally biased region" description="Polar residues" evidence="2">
    <location>
        <begin position="8"/>
        <end position="29"/>
    </location>
</feature>
<feature type="compositionally biased region" description="Basic and acidic residues" evidence="2">
    <location>
        <begin position="346"/>
        <end position="357"/>
    </location>
</feature>
<proteinExistence type="inferred from homology"/>
<gene>
    <name evidence="4" type="primary">rglT</name>
    <name type="ORF">AN1368</name>
    <name type="ORF">ANIA_01368</name>
</gene>
<reference key="1">
    <citation type="journal article" date="2005" name="Nature">
        <title>Sequencing of Aspergillus nidulans and comparative analysis with A. fumigatus and A. oryzae.</title>
        <authorList>
            <person name="Galagan J.E."/>
            <person name="Calvo S.E."/>
            <person name="Cuomo C."/>
            <person name="Ma L.-J."/>
            <person name="Wortman J.R."/>
            <person name="Batzoglou S."/>
            <person name="Lee S.-I."/>
            <person name="Bastuerkmen M."/>
            <person name="Spevak C.C."/>
            <person name="Clutterbuck J."/>
            <person name="Kapitonov V."/>
            <person name="Jurka J."/>
            <person name="Scazzocchio C."/>
            <person name="Farman M.L."/>
            <person name="Butler J."/>
            <person name="Purcell S."/>
            <person name="Harris S."/>
            <person name="Braus G.H."/>
            <person name="Draht O."/>
            <person name="Busch S."/>
            <person name="D'Enfert C."/>
            <person name="Bouchier C."/>
            <person name="Goldman G.H."/>
            <person name="Bell-Pedersen D."/>
            <person name="Griffiths-Jones S."/>
            <person name="Doonan J.H."/>
            <person name="Yu J."/>
            <person name="Vienken K."/>
            <person name="Pain A."/>
            <person name="Freitag M."/>
            <person name="Selker E.U."/>
            <person name="Archer D.B."/>
            <person name="Penalva M.A."/>
            <person name="Oakley B.R."/>
            <person name="Momany M."/>
            <person name="Tanaka T."/>
            <person name="Kumagai T."/>
            <person name="Asai K."/>
            <person name="Machida M."/>
            <person name="Nierman W.C."/>
            <person name="Denning D.W."/>
            <person name="Caddick M.X."/>
            <person name="Hynes M."/>
            <person name="Paoletti M."/>
            <person name="Fischer R."/>
            <person name="Miller B.L."/>
            <person name="Dyer P.S."/>
            <person name="Sachs M.S."/>
            <person name="Osmani S.A."/>
            <person name="Birren B.W."/>
        </authorList>
    </citation>
    <scope>NUCLEOTIDE SEQUENCE [LARGE SCALE GENOMIC DNA]</scope>
    <source>
        <strain>FGSC A4 / ATCC 38163 / CBS 112.46 / NRRL 194 / M139</strain>
    </source>
</reference>
<reference key="2">
    <citation type="journal article" date="2009" name="Fungal Genet. Biol.">
        <title>The 2008 update of the Aspergillus nidulans genome annotation: a community effort.</title>
        <authorList>
            <person name="Wortman J.R."/>
            <person name="Gilsenan J.M."/>
            <person name="Joardar V."/>
            <person name="Deegan J."/>
            <person name="Clutterbuck J."/>
            <person name="Andersen M.R."/>
            <person name="Archer D."/>
            <person name="Bencina M."/>
            <person name="Braus G."/>
            <person name="Coutinho P."/>
            <person name="von Dohren H."/>
            <person name="Doonan J."/>
            <person name="Driessen A.J."/>
            <person name="Durek P."/>
            <person name="Espeso E."/>
            <person name="Fekete E."/>
            <person name="Flipphi M."/>
            <person name="Estrada C.G."/>
            <person name="Geysens S."/>
            <person name="Goldman G."/>
            <person name="de Groot P.W."/>
            <person name="Hansen K."/>
            <person name="Harris S.D."/>
            <person name="Heinekamp T."/>
            <person name="Helmstaedt K."/>
            <person name="Henrissat B."/>
            <person name="Hofmann G."/>
            <person name="Homan T."/>
            <person name="Horio T."/>
            <person name="Horiuchi H."/>
            <person name="James S."/>
            <person name="Jones M."/>
            <person name="Karaffa L."/>
            <person name="Karanyi Z."/>
            <person name="Kato M."/>
            <person name="Keller N."/>
            <person name="Kelly D.E."/>
            <person name="Kiel J.A."/>
            <person name="Kim J.M."/>
            <person name="van der Klei I.J."/>
            <person name="Klis F.M."/>
            <person name="Kovalchuk A."/>
            <person name="Krasevec N."/>
            <person name="Kubicek C.P."/>
            <person name="Liu B."/>
            <person name="Maccabe A."/>
            <person name="Meyer V."/>
            <person name="Mirabito P."/>
            <person name="Miskei M."/>
            <person name="Mos M."/>
            <person name="Mullins J."/>
            <person name="Nelson D.R."/>
            <person name="Nielsen J."/>
            <person name="Oakley B.R."/>
            <person name="Osmani S.A."/>
            <person name="Pakula T."/>
            <person name="Paszewski A."/>
            <person name="Paulsen I."/>
            <person name="Pilsyk S."/>
            <person name="Pocsi I."/>
            <person name="Punt P.J."/>
            <person name="Ram A.F."/>
            <person name="Ren Q."/>
            <person name="Robellet X."/>
            <person name="Robson G."/>
            <person name="Seiboth B."/>
            <person name="van Solingen P."/>
            <person name="Specht T."/>
            <person name="Sun J."/>
            <person name="Taheri-Talesh N."/>
            <person name="Takeshita N."/>
            <person name="Ussery D."/>
            <person name="vanKuyk P.A."/>
            <person name="Visser H."/>
            <person name="van de Vondervoort P.J."/>
            <person name="de Vries R.P."/>
            <person name="Walton J."/>
            <person name="Xiang X."/>
            <person name="Xiong Y."/>
            <person name="Zeng A.P."/>
            <person name="Brandt B.W."/>
            <person name="Cornell M.J."/>
            <person name="van den Hondel C.A."/>
            <person name="Visser J."/>
            <person name="Oliver S.G."/>
            <person name="Turner G."/>
        </authorList>
    </citation>
    <scope>GENOME REANNOTATION</scope>
    <source>
        <strain>FGSC A4 / ATCC 38163 / CBS 112.46 / NRRL 194 / M139</strain>
    </source>
</reference>
<reference key="3">
    <citation type="journal article" date="2020" name="PLoS Pathog.">
        <title>The Aspergillus fumigatus transcription factor RglT is important for gliotoxin biosynthesis and self-protection, and virulence.</title>
        <authorList>
            <person name="Ries L.N.A."/>
            <person name="Pardeshi L."/>
            <person name="Dong Z."/>
            <person name="Tan K."/>
            <person name="Steenwyk J.L."/>
            <person name="Colabardini A.C."/>
            <person name="Ferreira Filho J.A."/>
            <person name="de Castro P.A."/>
            <person name="Silva L.P."/>
            <person name="Preite N.W."/>
            <person name="Almeida F."/>
            <person name="de Assis L.J."/>
            <person name="Dos Santos R.A.C."/>
            <person name="Bowyer P."/>
            <person name="Bromley M."/>
            <person name="Owens R.A."/>
            <person name="Doyle S."/>
            <person name="Demasi M."/>
            <person name="Hernandez D.C.R."/>
            <person name="Netto L.E.S."/>
            <person name="Pupo M.T."/>
            <person name="Rokas A."/>
            <person name="Loures F.V."/>
            <person name="Wong K.H."/>
            <person name="Goldman G.H."/>
        </authorList>
    </citation>
    <scope>FUNCTION</scope>
    <scope>DISRUPTION PHENOTYPE</scope>
</reference>
<accession>A0A1U8QZJ7</accession>
<accession>C8VRW1</accession>
<accession>Q5BDL2</accession>
<dbReference type="EMBL" id="BN001308">
    <property type="protein sequence ID" value="CBF87636.1"/>
    <property type="molecule type" value="Genomic_DNA"/>
</dbReference>
<dbReference type="EMBL" id="AACD01000018">
    <property type="protein sequence ID" value="EAA65551.1"/>
    <property type="molecule type" value="Genomic_DNA"/>
</dbReference>
<dbReference type="RefSeq" id="XP_658972.1">
    <property type="nucleotide sequence ID" value="XM_653880.1"/>
</dbReference>
<dbReference type="SMR" id="A0A1U8QZJ7"/>
<dbReference type="EnsemblFungi" id="CBF87636">
    <property type="protein sequence ID" value="CBF87636"/>
    <property type="gene ID" value="ANIA_01368"/>
</dbReference>
<dbReference type="GeneID" id="2877143"/>
<dbReference type="KEGG" id="ani:ANIA_01368"/>
<dbReference type="VEuPathDB" id="FungiDB:AN1368"/>
<dbReference type="eggNOG" id="ENOG502SE9E">
    <property type="taxonomic scope" value="Eukaryota"/>
</dbReference>
<dbReference type="HOGENOM" id="CLU_026660_1_0_1"/>
<dbReference type="InParanoid" id="A0A1U8QZJ7"/>
<dbReference type="OMA" id="PKRHAAC"/>
<dbReference type="OrthoDB" id="10261408at2759"/>
<dbReference type="Proteomes" id="UP000000560">
    <property type="component" value="Chromosome VIII"/>
</dbReference>
<dbReference type="GO" id="GO:0005634">
    <property type="term" value="C:nucleus"/>
    <property type="evidence" value="ECO:0000318"/>
    <property type="project" value="GO_Central"/>
</dbReference>
<dbReference type="GO" id="GO:0003677">
    <property type="term" value="F:DNA binding"/>
    <property type="evidence" value="ECO:0007669"/>
    <property type="project" value="UniProtKB-KW"/>
</dbReference>
<dbReference type="GO" id="GO:0000981">
    <property type="term" value="F:DNA-binding transcription factor activity, RNA polymerase II-specific"/>
    <property type="evidence" value="ECO:0007669"/>
    <property type="project" value="InterPro"/>
</dbReference>
<dbReference type="GO" id="GO:0008270">
    <property type="term" value="F:zinc ion binding"/>
    <property type="evidence" value="ECO:0007669"/>
    <property type="project" value="InterPro"/>
</dbReference>
<dbReference type="GO" id="GO:0045944">
    <property type="term" value="P:positive regulation of transcription by RNA polymerase II"/>
    <property type="evidence" value="ECO:0000318"/>
    <property type="project" value="GO_Central"/>
</dbReference>
<dbReference type="CDD" id="cd00067">
    <property type="entry name" value="GAL4"/>
    <property type="match status" value="1"/>
</dbReference>
<dbReference type="Gene3D" id="4.10.240.10">
    <property type="entry name" value="Zn(2)-C6 fungal-type DNA-binding domain"/>
    <property type="match status" value="1"/>
</dbReference>
<dbReference type="InterPro" id="IPR051711">
    <property type="entry name" value="Stress_Response_Reg"/>
</dbReference>
<dbReference type="InterPro" id="IPR036864">
    <property type="entry name" value="Zn2-C6_fun-type_DNA-bd_sf"/>
</dbReference>
<dbReference type="InterPro" id="IPR001138">
    <property type="entry name" value="Zn2Cys6_DnaBD"/>
</dbReference>
<dbReference type="PANTHER" id="PTHR47540">
    <property type="entry name" value="THIAMINE REPRESSIBLE GENES REGULATORY PROTEIN THI5"/>
    <property type="match status" value="1"/>
</dbReference>
<dbReference type="PANTHER" id="PTHR47540:SF4">
    <property type="entry name" value="TRANSCRIPTION FACTOR RGLT"/>
    <property type="match status" value="1"/>
</dbReference>
<dbReference type="Pfam" id="PF00172">
    <property type="entry name" value="Zn_clus"/>
    <property type="match status" value="1"/>
</dbReference>
<dbReference type="SMART" id="SM00066">
    <property type="entry name" value="GAL4"/>
    <property type="match status" value="1"/>
</dbReference>
<dbReference type="SUPFAM" id="SSF57701">
    <property type="entry name" value="Zn2/Cys6 DNA-binding domain"/>
    <property type="match status" value="1"/>
</dbReference>
<dbReference type="PROSITE" id="PS00463">
    <property type="entry name" value="ZN2_CY6_FUNGAL_1"/>
    <property type="match status" value="1"/>
</dbReference>
<dbReference type="PROSITE" id="PS50048">
    <property type="entry name" value="ZN2_CY6_FUNGAL_2"/>
    <property type="match status" value="1"/>
</dbReference>
<organism>
    <name type="scientific">Emericella nidulans (strain FGSC A4 / ATCC 38163 / CBS 112.46 / NRRL 194 / M139)</name>
    <name type="common">Aspergillus nidulans</name>
    <dbReference type="NCBI Taxonomy" id="227321"/>
    <lineage>
        <taxon>Eukaryota</taxon>
        <taxon>Fungi</taxon>
        <taxon>Dikarya</taxon>
        <taxon>Ascomycota</taxon>
        <taxon>Pezizomycotina</taxon>
        <taxon>Eurotiomycetes</taxon>
        <taxon>Eurotiomycetidae</taxon>
        <taxon>Eurotiales</taxon>
        <taxon>Aspergillaceae</taxon>
        <taxon>Aspergillus</taxon>
        <taxon>Aspergillus subgen. Nidulantes</taxon>
    </lineage>
</organism>
<evidence type="ECO:0000255" key="1">
    <source>
        <dbReference type="PROSITE-ProRule" id="PRU00227"/>
    </source>
</evidence>
<evidence type="ECO:0000256" key="2">
    <source>
        <dbReference type="SAM" id="MobiDB-lite"/>
    </source>
</evidence>
<evidence type="ECO:0000269" key="3">
    <source>
    </source>
</evidence>
<evidence type="ECO:0000303" key="4">
    <source>
    </source>
</evidence>